<protein>
    <recommendedName>
        <fullName evidence="1">ATP synthase subunit beta</fullName>
        <ecNumber evidence="1">7.1.2.2</ecNumber>
    </recommendedName>
    <alternativeName>
        <fullName evidence="1">ATP synthase F1 sector subunit beta</fullName>
    </alternativeName>
    <alternativeName>
        <fullName evidence="1">F-ATPase subunit beta</fullName>
    </alternativeName>
</protein>
<keyword id="KW-0066">ATP synthesis</keyword>
<keyword id="KW-0067">ATP-binding</keyword>
<keyword id="KW-1003">Cell membrane</keyword>
<keyword id="KW-0139">CF(1)</keyword>
<keyword id="KW-0375">Hydrogen ion transport</keyword>
<keyword id="KW-0406">Ion transport</keyword>
<keyword id="KW-0472">Membrane</keyword>
<keyword id="KW-0547">Nucleotide-binding</keyword>
<keyword id="KW-1278">Translocase</keyword>
<keyword id="KW-0813">Transport</keyword>
<dbReference type="EC" id="7.1.2.2" evidence="1"/>
<dbReference type="EMBL" id="AP006716">
    <property type="protein sequence ID" value="BAE04241.1"/>
    <property type="molecule type" value="Genomic_DNA"/>
</dbReference>
<dbReference type="RefSeq" id="WP_011275243.1">
    <property type="nucleotide sequence ID" value="NC_007168.1"/>
</dbReference>
<dbReference type="SMR" id="Q4L7Y4"/>
<dbReference type="KEGG" id="sha:SH0932"/>
<dbReference type="eggNOG" id="COG0055">
    <property type="taxonomic scope" value="Bacteria"/>
</dbReference>
<dbReference type="HOGENOM" id="CLU_022398_0_2_9"/>
<dbReference type="OrthoDB" id="9801639at2"/>
<dbReference type="Proteomes" id="UP000000543">
    <property type="component" value="Chromosome"/>
</dbReference>
<dbReference type="GO" id="GO:0005886">
    <property type="term" value="C:plasma membrane"/>
    <property type="evidence" value="ECO:0007669"/>
    <property type="project" value="UniProtKB-SubCell"/>
</dbReference>
<dbReference type="GO" id="GO:0045259">
    <property type="term" value="C:proton-transporting ATP synthase complex"/>
    <property type="evidence" value="ECO:0007669"/>
    <property type="project" value="UniProtKB-KW"/>
</dbReference>
<dbReference type="GO" id="GO:0005524">
    <property type="term" value="F:ATP binding"/>
    <property type="evidence" value="ECO:0007669"/>
    <property type="project" value="UniProtKB-UniRule"/>
</dbReference>
<dbReference type="GO" id="GO:0016887">
    <property type="term" value="F:ATP hydrolysis activity"/>
    <property type="evidence" value="ECO:0007669"/>
    <property type="project" value="InterPro"/>
</dbReference>
<dbReference type="GO" id="GO:0046933">
    <property type="term" value="F:proton-transporting ATP synthase activity, rotational mechanism"/>
    <property type="evidence" value="ECO:0007669"/>
    <property type="project" value="UniProtKB-UniRule"/>
</dbReference>
<dbReference type="CDD" id="cd18110">
    <property type="entry name" value="ATP-synt_F1_beta_C"/>
    <property type="match status" value="1"/>
</dbReference>
<dbReference type="CDD" id="cd18115">
    <property type="entry name" value="ATP-synt_F1_beta_N"/>
    <property type="match status" value="1"/>
</dbReference>
<dbReference type="CDD" id="cd01133">
    <property type="entry name" value="F1-ATPase_beta_CD"/>
    <property type="match status" value="1"/>
</dbReference>
<dbReference type="FunFam" id="1.10.1140.10:FF:000001">
    <property type="entry name" value="ATP synthase subunit beta"/>
    <property type="match status" value="1"/>
</dbReference>
<dbReference type="FunFam" id="2.40.10.170:FF:000005">
    <property type="entry name" value="ATP synthase subunit beta"/>
    <property type="match status" value="1"/>
</dbReference>
<dbReference type="FunFam" id="3.40.50.300:FF:000004">
    <property type="entry name" value="ATP synthase subunit beta"/>
    <property type="match status" value="1"/>
</dbReference>
<dbReference type="Gene3D" id="2.40.10.170">
    <property type="match status" value="1"/>
</dbReference>
<dbReference type="Gene3D" id="1.10.1140.10">
    <property type="entry name" value="Bovine Mitochondrial F1-atpase, Atp Synthase Beta Chain, Chain D, domain 3"/>
    <property type="match status" value="1"/>
</dbReference>
<dbReference type="Gene3D" id="3.40.50.300">
    <property type="entry name" value="P-loop containing nucleotide triphosphate hydrolases"/>
    <property type="match status" value="1"/>
</dbReference>
<dbReference type="HAMAP" id="MF_01347">
    <property type="entry name" value="ATP_synth_beta_bact"/>
    <property type="match status" value="1"/>
</dbReference>
<dbReference type="InterPro" id="IPR003593">
    <property type="entry name" value="AAA+_ATPase"/>
</dbReference>
<dbReference type="InterPro" id="IPR055190">
    <property type="entry name" value="ATP-synt_VA_C"/>
</dbReference>
<dbReference type="InterPro" id="IPR005722">
    <property type="entry name" value="ATP_synth_F1_bsu"/>
</dbReference>
<dbReference type="InterPro" id="IPR020003">
    <property type="entry name" value="ATPase_a/bsu_AS"/>
</dbReference>
<dbReference type="InterPro" id="IPR050053">
    <property type="entry name" value="ATPase_alpha/beta_chains"/>
</dbReference>
<dbReference type="InterPro" id="IPR004100">
    <property type="entry name" value="ATPase_F1/V1/A1_a/bsu_N"/>
</dbReference>
<dbReference type="InterPro" id="IPR036121">
    <property type="entry name" value="ATPase_F1/V1/A1_a/bsu_N_sf"/>
</dbReference>
<dbReference type="InterPro" id="IPR000194">
    <property type="entry name" value="ATPase_F1/V1/A1_a/bsu_nucl-bd"/>
</dbReference>
<dbReference type="InterPro" id="IPR024034">
    <property type="entry name" value="ATPase_F1/V1_b/a_C"/>
</dbReference>
<dbReference type="InterPro" id="IPR027417">
    <property type="entry name" value="P-loop_NTPase"/>
</dbReference>
<dbReference type="NCBIfam" id="TIGR01039">
    <property type="entry name" value="atpD"/>
    <property type="match status" value="1"/>
</dbReference>
<dbReference type="PANTHER" id="PTHR15184">
    <property type="entry name" value="ATP SYNTHASE"/>
    <property type="match status" value="1"/>
</dbReference>
<dbReference type="PANTHER" id="PTHR15184:SF71">
    <property type="entry name" value="ATP SYNTHASE SUBUNIT BETA, MITOCHONDRIAL"/>
    <property type="match status" value="1"/>
</dbReference>
<dbReference type="Pfam" id="PF00006">
    <property type="entry name" value="ATP-synt_ab"/>
    <property type="match status" value="1"/>
</dbReference>
<dbReference type="Pfam" id="PF02874">
    <property type="entry name" value="ATP-synt_ab_N"/>
    <property type="match status" value="1"/>
</dbReference>
<dbReference type="Pfam" id="PF22919">
    <property type="entry name" value="ATP-synt_VA_C"/>
    <property type="match status" value="1"/>
</dbReference>
<dbReference type="SMART" id="SM00382">
    <property type="entry name" value="AAA"/>
    <property type="match status" value="1"/>
</dbReference>
<dbReference type="SUPFAM" id="SSF47917">
    <property type="entry name" value="C-terminal domain of alpha and beta subunits of F1 ATP synthase"/>
    <property type="match status" value="1"/>
</dbReference>
<dbReference type="SUPFAM" id="SSF50615">
    <property type="entry name" value="N-terminal domain of alpha and beta subunits of F1 ATP synthase"/>
    <property type="match status" value="1"/>
</dbReference>
<dbReference type="SUPFAM" id="SSF52540">
    <property type="entry name" value="P-loop containing nucleoside triphosphate hydrolases"/>
    <property type="match status" value="1"/>
</dbReference>
<dbReference type="PROSITE" id="PS00152">
    <property type="entry name" value="ATPASE_ALPHA_BETA"/>
    <property type="match status" value="1"/>
</dbReference>
<comment type="function">
    <text evidence="1">Produces ATP from ADP in the presence of a proton gradient across the membrane. The catalytic sites are hosted primarily by the beta subunits.</text>
</comment>
<comment type="catalytic activity">
    <reaction evidence="1">
        <text>ATP + H2O + 4 H(+)(in) = ADP + phosphate + 5 H(+)(out)</text>
        <dbReference type="Rhea" id="RHEA:57720"/>
        <dbReference type="ChEBI" id="CHEBI:15377"/>
        <dbReference type="ChEBI" id="CHEBI:15378"/>
        <dbReference type="ChEBI" id="CHEBI:30616"/>
        <dbReference type="ChEBI" id="CHEBI:43474"/>
        <dbReference type="ChEBI" id="CHEBI:456216"/>
        <dbReference type="EC" id="7.1.2.2"/>
    </reaction>
</comment>
<comment type="subunit">
    <text evidence="1">F-type ATPases have 2 components, CF(1) - the catalytic core - and CF(0) - the membrane proton channel. CF(1) has five subunits: alpha(3), beta(3), gamma(1), delta(1), epsilon(1). CF(0) has three main subunits: a(1), b(2) and c(9-12). The alpha and beta chains form an alternating ring which encloses part of the gamma chain. CF(1) is attached to CF(0) by a central stalk formed by the gamma and epsilon chains, while a peripheral stalk is formed by the delta and b chains.</text>
</comment>
<comment type="subcellular location">
    <subcellularLocation>
        <location evidence="1">Cell membrane</location>
        <topology evidence="1">Peripheral membrane protein</topology>
    </subcellularLocation>
</comment>
<comment type="similarity">
    <text evidence="1">Belongs to the ATPase alpha/beta chains family.</text>
</comment>
<gene>
    <name evidence="1" type="primary">atpD</name>
    <name type="ordered locus">SH0932</name>
</gene>
<accession>Q4L7Y4</accession>
<feature type="chain" id="PRO_0000254384" description="ATP synthase subunit beta">
    <location>
        <begin position="1"/>
        <end position="470"/>
    </location>
</feature>
<feature type="binding site" evidence="1">
    <location>
        <begin position="155"/>
        <end position="162"/>
    </location>
    <ligand>
        <name>ATP</name>
        <dbReference type="ChEBI" id="CHEBI:30616"/>
    </ligand>
</feature>
<reference key="1">
    <citation type="journal article" date="2005" name="J. Bacteriol.">
        <title>Whole-genome sequencing of Staphylococcus haemolyticus uncovers the extreme plasticity of its genome and the evolution of human-colonizing staphylococcal species.</title>
        <authorList>
            <person name="Takeuchi F."/>
            <person name="Watanabe S."/>
            <person name="Baba T."/>
            <person name="Yuzawa H."/>
            <person name="Ito T."/>
            <person name="Morimoto Y."/>
            <person name="Kuroda M."/>
            <person name="Cui L."/>
            <person name="Takahashi M."/>
            <person name="Ankai A."/>
            <person name="Baba S."/>
            <person name="Fukui S."/>
            <person name="Lee J.C."/>
            <person name="Hiramatsu K."/>
        </authorList>
    </citation>
    <scope>NUCLEOTIDE SEQUENCE [LARGE SCALE GENOMIC DNA]</scope>
    <source>
        <strain>JCSC1435</strain>
    </source>
</reference>
<evidence type="ECO:0000255" key="1">
    <source>
        <dbReference type="HAMAP-Rule" id="MF_01347"/>
    </source>
</evidence>
<sequence length="470" mass="51576">MSNGRVTQVMGPVIDVRFEHNEVPEINNALIIEVPKEDGTFELTLEVALQLGDDVVRTIAMDSTDGVQRGMEVQNTGKDISVPVGEVTLGRVFNVLGDTIDLEDKLDGSVRRDPIHRQSPNFDELSTEVEILETGIKVVDLLAPYIKGGKIGLFGGAGVGKTVLIQELINNIAQEHGGISVFAGVGERTREGNDLYYEMRDSGVIKKTAMVFGQMNEPPGARMRVALSALTMAEYFRDEQGQDVLLFIDNIFRFTQAGSEVSALLGRMPSAVGYQPTLATEMGQLQERITSTNKGSVTSIQAVFVPADDYTDPAPATAFAHLDATTNLERKLTEMGIYPAVDPLASTSRALEPAIVGQEHYEVARDVQSTLQKYRELQDIIAILGMDELSEEDKLTVERARRIQFFLSQNFHVAEQFTGQKGSYVPVKTTVADFKDILDGKYDHIPEDAFRLVGSMEDVIAKAKDMGVEV</sequence>
<organism>
    <name type="scientific">Staphylococcus haemolyticus (strain JCSC1435)</name>
    <dbReference type="NCBI Taxonomy" id="279808"/>
    <lineage>
        <taxon>Bacteria</taxon>
        <taxon>Bacillati</taxon>
        <taxon>Bacillota</taxon>
        <taxon>Bacilli</taxon>
        <taxon>Bacillales</taxon>
        <taxon>Staphylococcaceae</taxon>
        <taxon>Staphylococcus</taxon>
    </lineage>
</organism>
<proteinExistence type="inferred from homology"/>
<name>ATPB_STAHJ</name>